<feature type="signal peptide" evidence="3">
    <location>
        <begin position="1"/>
        <end position="23"/>
    </location>
</feature>
<feature type="chain" id="PRO_0000311805" description="DAN domain family member 5">
    <location>
        <begin position="24"/>
        <end position="185"/>
    </location>
</feature>
<feature type="domain" description="CTCK">
    <location>
        <begin position="97"/>
        <end position="182"/>
    </location>
</feature>
<feature type="glycosylation site" description="N-linked (GlcNAc...) asparagine" evidence="3">
    <location>
        <position position="39"/>
    </location>
</feature>
<feature type="disulfide bond" evidence="1">
    <location>
        <begin position="97"/>
        <end position="144"/>
    </location>
</feature>
<feature type="disulfide bond" evidence="1">
    <location>
        <begin position="111"/>
        <end position="158"/>
    </location>
</feature>
<feature type="disulfide bond" evidence="1">
    <location>
        <begin position="121"/>
        <end position="179"/>
    </location>
</feature>
<feature type="disulfide bond" evidence="1">
    <location>
        <begin position="125"/>
        <end position="181"/>
    </location>
</feature>
<proteinExistence type="evidence at transcript level"/>
<gene>
    <name type="primary">Dand5</name>
    <name evidence="10" type="synonym">Cerl2</name>
    <name evidence="11" type="synonym">Coco</name>
    <name evidence="12" type="synonym">Sp1</name>
</gene>
<dbReference type="EMBL" id="AY387409">
    <property type="protein sequence ID" value="AAR25615.1"/>
    <property type="molecule type" value="mRNA"/>
</dbReference>
<dbReference type="EMBL" id="AB070694">
    <property type="protein sequence ID" value="BAC82439.1"/>
    <property type="molecule type" value="mRNA"/>
</dbReference>
<dbReference type="EMBL" id="BC115659">
    <property type="protein sequence ID" value="AAI15660.1"/>
    <property type="molecule type" value="mRNA"/>
</dbReference>
<dbReference type="CCDS" id="CCDS22477.1"/>
<dbReference type="RefSeq" id="NP_957679.1">
    <property type="nucleotide sequence ID" value="NM_201227.3"/>
</dbReference>
<dbReference type="SMR" id="Q76LW6"/>
<dbReference type="BioGRID" id="204764">
    <property type="interactions" value="1"/>
</dbReference>
<dbReference type="FunCoup" id="Q76LW6">
    <property type="interactions" value="672"/>
</dbReference>
<dbReference type="STRING" id="10090.ENSMUSP00000070057"/>
<dbReference type="GlyCosmos" id="Q76LW6">
    <property type="glycosylation" value="1 site, No reported glycans"/>
</dbReference>
<dbReference type="GlyGen" id="Q76LW6">
    <property type="glycosylation" value="2 sites, 1 O-linked glycan (1 site)"/>
</dbReference>
<dbReference type="PhosphoSitePlus" id="Q76LW6"/>
<dbReference type="PaxDb" id="10090-ENSMUSP00000070057"/>
<dbReference type="Antibodypedia" id="26335">
    <property type="antibodies" value="276 antibodies from 22 providers"/>
</dbReference>
<dbReference type="DNASU" id="23863"/>
<dbReference type="Ensembl" id="ENSMUST00000065539.6">
    <property type="protein sequence ID" value="ENSMUSP00000070057.5"/>
    <property type="gene ID" value="ENSMUSG00000053226.8"/>
</dbReference>
<dbReference type="GeneID" id="23863"/>
<dbReference type="KEGG" id="mmu:23863"/>
<dbReference type="UCSC" id="uc009mnh.1">
    <property type="organism name" value="mouse"/>
</dbReference>
<dbReference type="AGR" id="MGI:1344365"/>
<dbReference type="CTD" id="199699"/>
<dbReference type="MGI" id="MGI:1344365">
    <property type="gene designation" value="Dand5"/>
</dbReference>
<dbReference type="VEuPathDB" id="HostDB:ENSMUSG00000053226"/>
<dbReference type="eggNOG" id="ENOG502RZ3T">
    <property type="taxonomic scope" value="Eukaryota"/>
</dbReference>
<dbReference type="GeneTree" id="ENSGT00530000063926"/>
<dbReference type="HOGENOM" id="CLU_122900_0_0_1"/>
<dbReference type="InParanoid" id="Q76LW6"/>
<dbReference type="OMA" id="PVVLWCR"/>
<dbReference type="OrthoDB" id="10061784at2759"/>
<dbReference type="PhylomeDB" id="Q76LW6"/>
<dbReference type="TreeFam" id="TF106445"/>
<dbReference type="BioGRID-ORCS" id="23863">
    <property type="hits" value="6 hits in 76 CRISPR screens"/>
</dbReference>
<dbReference type="ChiTaRS" id="Dand5">
    <property type="organism name" value="mouse"/>
</dbReference>
<dbReference type="PRO" id="PR:Q76LW6"/>
<dbReference type="Proteomes" id="UP000000589">
    <property type="component" value="Chromosome 8"/>
</dbReference>
<dbReference type="RNAct" id="Q76LW6">
    <property type="molecule type" value="protein"/>
</dbReference>
<dbReference type="Bgee" id="ENSMUSG00000053226">
    <property type="expression patterns" value="Expressed in primitive knot and 108 other cell types or tissues"/>
</dbReference>
<dbReference type="GO" id="GO:0005576">
    <property type="term" value="C:extracellular region"/>
    <property type="evidence" value="ECO:0000303"/>
    <property type="project" value="BHF-UCL"/>
</dbReference>
<dbReference type="GO" id="GO:0016015">
    <property type="term" value="F:morphogen activity"/>
    <property type="evidence" value="ECO:0000315"/>
    <property type="project" value="BHF-UCL"/>
</dbReference>
<dbReference type="GO" id="GO:0003283">
    <property type="term" value="P:atrial septum development"/>
    <property type="evidence" value="ECO:0000315"/>
    <property type="project" value="BHF-UCL"/>
</dbReference>
<dbReference type="GO" id="GO:0061371">
    <property type="term" value="P:determination of heart left/right asymmetry"/>
    <property type="evidence" value="ECO:0000315"/>
    <property type="project" value="BHF-UCL"/>
</dbReference>
<dbReference type="GO" id="GO:0003140">
    <property type="term" value="P:determination of left/right asymmetry in lateral mesoderm"/>
    <property type="evidence" value="ECO:0000315"/>
    <property type="project" value="BHF-UCL"/>
</dbReference>
<dbReference type="GO" id="GO:0007368">
    <property type="term" value="P:determination of left/right symmetry"/>
    <property type="evidence" value="ECO:0000315"/>
    <property type="project" value="MGI"/>
</dbReference>
<dbReference type="GO" id="GO:0030514">
    <property type="term" value="P:negative regulation of BMP signaling pathway"/>
    <property type="evidence" value="ECO:0000314"/>
    <property type="project" value="BHF-UCL"/>
</dbReference>
<dbReference type="GO" id="GO:1900108">
    <property type="term" value="P:negative regulation of nodal signaling pathway"/>
    <property type="evidence" value="ECO:0000314"/>
    <property type="project" value="BHF-UCL"/>
</dbReference>
<dbReference type="GO" id="GO:0030512">
    <property type="term" value="P:negative regulation of transforming growth factor beta receptor signaling pathway"/>
    <property type="evidence" value="ECO:0000316"/>
    <property type="project" value="MGI"/>
</dbReference>
<dbReference type="GO" id="GO:0017015">
    <property type="term" value="P:regulation of transforming growth factor beta receptor signaling pathway"/>
    <property type="evidence" value="ECO:0000314"/>
    <property type="project" value="MGI"/>
</dbReference>
<dbReference type="GO" id="GO:0038101">
    <property type="term" value="P:sequestering of nodal from receptor via nodal binding"/>
    <property type="evidence" value="ECO:0000314"/>
    <property type="project" value="BHF-UCL"/>
</dbReference>
<dbReference type="GO" id="GO:0003281">
    <property type="term" value="P:ventricular septum development"/>
    <property type="evidence" value="ECO:0000315"/>
    <property type="project" value="BHF-UCL"/>
</dbReference>
<dbReference type="FunFam" id="2.10.90.10:FF:000045">
    <property type="entry name" value="DAN domain BMP antagonist family member 5"/>
    <property type="match status" value="1"/>
</dbReference>
<dbReference type="Gene3D" id="2.10.90.10">
    <property type="entry name" value="Cystine-knot cytokines"/>
    <property type="match status" value="1"/>
</dbReference>
<dbReference type="InterPro" id="IPR016860">
    <property type="entry name" value="Cerberus"/>
</dbReference>
<dbReference type="InterPro" id="IPR006207">
    <property type="entry name" value="Cys_knot_C"/>
</dbReference>
<dbReference type="InterPro" id="IPR029034">
    <property type="entry name" value="Cystine-knot_cytokine"/>
</dbReference>
<dbReference type="InterPro" id="IPR004133">
    <property type="entry name" value="DAN"/>
</dbReference>
<dbReference type="PANTHER" id="PTHR15273">
    <property type="entry name" value="DAN DOMAIN FAMILY MEMBER 5"/>
    <property type="match status" value="1"/>
</dbReference>
<dbReference type="PANTHER" id="PTHR15273:SF5">
    <property type="entry name" value="DAN DOMAIN FAMILY MEMBER 5"/>
    <property type="match status" value="1"/>
</dbReference>
<dbReference type="Pfam" id="PF03045">
    <property type="entry name" value="DAN"/>
    <property type="match status" value="1"/>
</dbReference>
<dbReference type="PIRSF" id="PIRSF027807">
    <property type="entry name" value="Cerberus"/>
    <property type="match status" value="1"/>
</dbReference>
<dbReference type="SMART" id="SM00041">
    <property type="entry name" value="CT"/>
    <property type="match status" value="1"/>
</dbReference>
<evidence type="ECO:0000250" key="1">
    <source>
        <dbReference type="UniProtKB" id="O60565"/>
    </source>
</evidence>
<evidence type="ECO:0000250" key="2">
    <source>
        <dbReference type="UniProtKB" id="Q8N907"/>
    </source>
</evidence>
<evidence type="ECO:0000255" key="3"/>
<evidence type="ECO:0000269" key="4">
    <source>
    </source>
</evidence>
<evidence type="ECO:0000269" key="5">
    <source>
    </source>
</evidence>
<evidence type="ECO:0000269" key="6">
    <source>
    </source>
</evidence>
<evidence type="ECO:0000269" key="7">
    <source>
    </source>
</evidence>
<evidence type="ECO:0000269" key="8">
    <source>
    </source>
</evidence>
<evidence type="ECO:0000303" key="9">
    <source>
    </source>
</evidence>
<evidence type="ECO:0000303" key="10">
    <source>
    </source>
</evidence>
<evidence type="ECO:0000303" key="11">
    <source>
    </source>
</evidence>
<evidence type="ECO:0000303" key="12">
    <source ref="2"/>
</evidence>
<evidence type="ECO:0000305" key="13"/>
<organism>
    <name type="scientific">Mus musculus</name>
    <name type="common">Mouse</name>
    <dbReference type="NCBI Taxonomy" id="10090"/>
    <lineage>
        <taxon>Eukaryota</taxon>
        <taxon>Metazoa</taxon>
        <taxon>Chordata</taxon>
        <taxon>Craniata</taxon>
        <taxon>Vertebrata</taxon>
        <taxon>Euteleostomi</taxon>
        <taxon>Mammalia</taxon>
        <taxon>Eutheria</taxon>
        <taxon>Euarchontoglires</taxon>
        <taxon>Glires</taxon>
        <taxon>Rodentia</taxon>
        <taxon>Myomorpha</taxon>
        <taxon>Muroidea</taxon>
        <taxon>Muridae</taxon>
        <taxon>Murinae</taxon>
        <taxon>Mus</taxon>
        <taxon>Mus</taxon>
    </lineage>
</organism>
<sequence>MFRSQFTTLLGLFSGAWLPTGSGRPGAPATPVQSGTAINQSWTLDPLVPISALGSWEAFLGLQNKQQGTGELQGGGQRVAAGVPLPLAPQEVLQETCKALSFVQVISRPGCTSARVLNHLCFGRCSSFYIPSSDPTPVVFCNSCVPARKRWTSVTLWCGAGQLASPRRVRISTVLVQKCQCRPKL</sequence>
<protein>
    <recommendedName>
        <fullName>DAN domain family member 5</fullName>
    </recommendedName>
    <alternativeName>
        <fullName evidence="9 10">Cerberus-like protein 2</fullName>
        <shortName evidence="9">Cerl-2</shortName>
    </alternativeName>
</protein>
<comment type="function">
    <text evidence="2 4 5 6">Antagonist of the extracellular signaling protein NODAL, which is required for correct left-right patterning during embryonic development (PubMed:15466485). Antagonist of BMP4 signaling (PubMed:15466485). Antagonist of TGF-beta signaling (By similarity). Independently of its role in left-right axis establishment, plays a role during heart development, possibly through the regulation of TGF-beta/Nodal signaling pathway (PubMed:25033293). Displays anti-angiogenic activity by inhibiting endothelial sprouting, migration, and proliferation (PubMed:33587337). Once internalized by endothelial cells, may alter their redox and glycolytic balance (By similarity).</text>
</comment>
<comment type="subcellular location">
    <subcellularLocation>
        <location evidence="13">Secreted</location>
    </subcellularLocation>
    <text evidence="2">Circulating DAND5 may be uptaken by endothelial cells and transported to mitochondria.</text>
</comment>
<comment type="tissue specificity">
    <text evidence="6">Expressed throughout the neural retina and in the photoreceptor nuclear layer. In the retina, widely expressed in inner nuclear layer, as well as in the ganglion cell layer.</text>
</comment>
<comment type="developmental stage">
    <text evidence="4 5 7">At 7.0 dpc (early headfold stage) expressed in perinodal region, specifically in crown cells on both sides of the node. Its distribution remains symmetric until the zero-somite stage (PubMed:15466485, PubMed:34210974). At 7.5 dpc (late head-fold stage) expression begins to decrease in intensity on the left side and starts to be asymmetrically up-regulated on the right side of the node. By early 8.0 dpc (somitogenesis), highly expressed in the right side of the node (PubMed:15466485, PubMed:34210974). Asymmetric expression is maintained at least until the 6-somite stage. The decline in the abundance on the left side coincides with a gradual increase in NODAL flow (PubMed:34210974). Expressed in the developping heart at 10.5 dpc. At 13.5 dpc, higher expression levels in the left ventricle compared to the right ventricle. At 15.5 dpc, not detected anymore (PubMed:25033293).</text>
</comment>
<comment type="induction">
    <text evidence="7 8">Down-regulation during the establishment of embryonic left-right axis could be due to translation repression involving BICC1 and possibly DICER1 and/or transcript degradation, involving BICC1 and the CCR4-NOT complex (PubMed:34210974, PubMed:34531379). Attenuated DAND5 expression lifts repression of NODAL and defines leftness by induction of the left lateral plate mesoderm NODAL signaling cascade (PubMed:34531379).</text>
</comment>
<comment type="disruption phenotype">
    <text evidence="4 5">Knockout animals are born at the expected Mendelian rate. However over a third of the homozygous mice die within the first 48 hours after birth, mostly due to cardiac defects. A proportion of surviving animals display multiple laterality defects including randomization of the left-right axis, left pulmonary isomerism thoracic situs inversus and cardiovascular malformations (PubMed:15466485). Knockout animals that do not display a laterality phenotype show a massive enlargement of the ventricular myocardium and a left ventricular systolic dysfunction (PubMed:25033293).</text>
</comment>
<comment type="similarity">
    <text evidence="13">Belongs to the DAN family.</text>
</comment>
<reference key="1">
    <citation type="journal article" date="2004" name="Genes Dev.">
        <title>The activity of the Nodal antagonist Cerl-2 in the mouse node is required for correct L/R body axis.</title>
        <authorList>
            <person name="Marques S."/>
            <person name="Borges A.C."/>
            <person name="Silva A.C."/>
            <person name="Freitas S."/>
            <person name="Cordenonsi M."/>
            <person name="Belo J.A."/>
        </authorList>
    </citation>
    <scope>NUCLEOTIDE SEQUENCE [MRNA]</scope>
    <scope>FUNCTION</scope>
    <scope>DEVELOPMENTAL STAGE</scope>
    <scope>DISRUPTION PHENOTYPE</scope>
    <source>
        <strain>C57BL/6J</strain>
    </source>
</reference>
<reference key="2">
    <citation type="submission" date="2001-08" db="EMBL/GenBank/DDBJ databases">
        <title>Cysteine knot protein (SP1).</title>
        <authorList>
            <person name="Itoh N."/>
        </authorList>
    </citation>
    <scope>NUCLEOTIDE SEQUENCE [MRNA]</scope>
</reference>
<reference key="3">
    <citation type="journal article" date="2004" name="Genome Res.">
        <title>The status, quality, and expansion of the NIH full-length cDNA project: the Mammalian Gene Collection (MGC).</title>
        <authorList>
            <consortium name="The MGC Project Team"/>
        </authorList>
    </citation>
    <scope>NUCLEOTIDE SEQUENCE [LARGE SCALE MRNA]</scope>
</reference>
<reference key="4">
    <citation type="journal article" date="2014" name="PLoS ONE">
        <title>Targeted inactivation of Cerberus like-2 leads to left ventricular cardiac hyperplasia and systolic dysfunction in the mouse.</title>
        <authorList>
            <person name="Araujo A.C."/>
            <person name="Marques S."/>
            <person name="Belo J.A."/>
        </authorList>
    </citation>
    <scope>FUNCTION</scope>
    <scope>DEVELOPMENTAL STAGE</scope>
    <scope>DISRUPTION PHENOTYPE</scope>
</reference>
<reference key="5">
    <citation type="journal article" date="2021" name="EMBO Mol. Med.">
        <title>COCO/DAND5 inhibits developmental and pathological ocular angiogenesis.</title>
        <authorList>
            <person name="Popovic N."/>
            <person name="Hooker E."/>
            <person name="Barabino A."/>
            <person name="Flamier A."/>
            <person name="Provost F."/>
            <person name="Buscarlet M."/>
            <person name="Bernier G."/>
            <person name="Larrivee B."/>
        </authorList>
    </citation>
    <scope>FUNCTION</scope>
    <scope>TISSUE SPECIFICITY</scope>
</reference>
<reference key="6">
    <citation type="journal article" date="2021" name="Nat. Commun.">
        <title>Fluid flow-induced left-right asymmetric decay of Dand5 mRNA in the mouse embryo requires a Bicc1-Ccr4 RNA degradation complex.</title>
        <authorList>
            <person name="Minegishi K."/>
            <person name="Rothe B."/>
            <person name="Komatsu K.R."/>
            <person name="Ono H."/>
            <person name="Ikawa Y."/>
            <person name="Nishimura H."/>
            <person name="Katoh T.A."/>
            <person name="Kajikawa E."/>
            <person name="Sai X."/>
            <person name="Miyashita E."/>
            <person name="Takaoka K."/>
            <person name="Bando K."/>
            <person name="Kiyonari H."/>
            <person name="Yamamoto T."/>
            <person name="Saito H."/>
            <person name="Constam D.B."/>
            <person name="Hamada H."/>
        </authorList>
    </citation>
    <scope>INDUCTION BY BICC1</scope>
    <scope>DEVELOPMENTAL STAGE</scope>
</reference>
<reference key="7">
    <citation type="journal article" date="2021" name="Nat. Commun.">
        <title>Bicc1 and Dicer regulate left-right patterning through post-transcriptional control of the Nodal inhibitor Dand5.</title>
        <authorList>
            <person name="Maerker M."/>
            <person name="Getwan M."/>
            <person name="Dowdle M.E."/>
            <person name="McSheene J.C."/>
            <person name="Gonzalez V."/>
            <person name="Pelliccia J.L."/>
            <person name="Hamilton D.S."/>
            <person name="Yartseva V."/>
            <person name="Vejnar C."/>
            <person name="Tingler M."/>
            <person name="Minegishi K."/>
            <person name="Vick P."/>
            <person name="Giraldez A.J."/>
            <person name="Hamada H."/>
            <person name="Burdine R.D."/>
            <person name="Sheets M.D."/>
            <person name="Blum M."/>
            <person name="Schweickert A."/>
        </authorList>
    </citation>
    <scope>INDUCTION BY BICC1 AND DICER</scope>
</reference>
<keyword id="KW-1015">Disulfide bond</keyword>
<keyword id="KW-0325">Glycoprotein</keyword>
<keyword id="KW-1185">Reference proteome</keyword>
<keyword id="KW-0964">Secreted</keyword>
<keyword id="KW-0732">Signal</keyword>
<accession>Q76LW6</accession>
<name>DAND5_MOUSE</name>